<feature type="peptide" id="PRO_0000043485" description="Atrial natriuretic factor" evidence="2">
    <location>
        <begin position="1"/>
        <end position="27"/>
    </location>
</feature>
<feature type="disulfide bond" evidence="2">
    <location>
        <begin position="7"/>
        <end position="23"/>
    </location>
</feature>
<dbReference type="PIR" id="A33431">
    <property type="entry name" value="A33431"/>
</dbReference>
<dbReference type="GO" id="GO:0005576">
    <property type="term" value="C:extracellular region"/>
    <property type="evidence" value="ECO:0007669"/>
    <property type="project" value="UniProtKB-SubCell"/>
</dbReference>
<dbReference type="GO" id="GO:0005179">
    <property type="term" value="F:hormone activity"/>
    <property type="evidence" value="ECO:0007669"/>
    <property type="project" value="UniProtKB-KW"/>
</dbReference>
<dbReference type="GO" id="GO:0097746">
    <property type="term" value="P:blood vessel diameter maintenance"/>
    <property type="evidence" value="ECO:0007669"/>
    <property type="project" value="UniProtKB-KW"/>
</dbReference>
<dbReference type="GO" id="GO:0006182">
    <property type="term" value="P:cGMP biosynthetic process"/>
    <property type="evidence" value="ECO:0000250"/>
    <property type="project" value="GO_Central"/>
</dbReference>
<dbReference type="GO" id="GO:0007168">
    <property type="term" value="P:receptor guanylyl cyclase signaling pathway"/>
    <property type="evidence" value="ECO:0000250"/>
    <property type="project" value="UniProtKB"/>
</dbReference>
<dbReference type="InterPro" id="IPR000663">
    <property type="entry name" value="Natr_peptide"/>
</dbReference>
<dbReference type="InterPro" id="IPR030480">
    <property type="entry name" value="Natr_peptide_CS"/>
</dbReference>
<dbReference type="InterPro" id="IPR002408">
    <property type="entry name" value="Natriuretic_peptide_brain"/>
</dbReference>
<dbReference type="Pfam" id="PF00212">
    <property type="entry name" value="ANP"/>
    <property type="match status" value="1"/>
</dbReference>
<dbReference type="PRINTS" id="PR00712">
    <property type="entry name" value="BNATPEPTIDE"/>
</dbReference>
<dbReference type="PRINTS" id="PR00710">
    <property type="entry name" value="NATPEPTIDES"/>
</dbReference>
<dbReference type="SMART" id="SM00183">
    <property type="entry name" value="NAT_PEP"/>
    <property type="match status" value="1"/>
</dbReference>
<dbReference type="PROSITE" id="PS00263">
    <property type="entry name" value="NATRIURETIC_PEPTIDE"/>
    <property type="match status" value="1"/>
</dbReference>
<gene>
    <name type="primary">nppa</name>
</gene>
<protein>
    <recommendedName>
        <fullName>Natriuretic peptides A</fullName>
    </recommendedName>
    <alternativeName>
        <fullName>Prepronatriodilatin</fullName>
    </alternativeName>
    <component>
        <recommendedName>
            <fullName>Atrial natriuretic factor</fullName>
            <shortName>ANF</shortName>
        </recommendedName>
        <alternativeName>
            <fullName>Atrial natriuretic peptide</fullName>
            <shortName>ANP</shortName>
        </alternativeName>
    </component>
</protein>
<proteinExistence type="evidence at protein level"/>
<organism>
    <name type="scientific">Anguilla japonica</name>
    <name type="common">Japanese eel</name>
    <dbReference type="NCBI Taxonomy" id="7937"/>
    <lineage>
        <taxon>Eukaryota</taxon>
        <taxon>Metazoa</taxon>
        <taxon>Chordata</taxon>
        <taxon>Craniata</taxon>
        <taxon>Vertebrata</taxon>
        <taxon>Euteleostomi</taxon>
        <taxon>Actinopterygii</taxon>
        <taxon>Neopterygii</taxon>
        <taxon>Teleostei</taxon>
        <taxon>Anguilliformes</taxon>
        <taxon>Anguillidae</taxon>
        <taxon>Anguilla</taxon>
    </lineage>
</organism>
<reference key="1">
    <citation type="journal article" date="1989" name="Biochem. Biophys. Res. Commun.">
        <title>Amino acid sequence and relative biological activity of eel atrial natriuretic peptide.</title>
        <authorList>
            <person name="Takei Y."/>
            <person name="Takahashi A."/>
            <person name="Watanabe T.X."/>
            <person name="Nakajima K."/>
            <person name="Sakakibara S."/>
        </authorList>
    </citation>
    <scope>PROTEIN SEQUENCE</scope>
    <scope>DISULFIDE BOND</scope>
    <source>
        <tissue>Heart atrium</tissue>
    </source>
</reference>
<accession>P18144</accession>
<keyword id="KW-0903">Direct protein sequencing</keyword>
<keyword id="KW-1015">Disulfide bond</keyword>
<keyword id="KW-0372">Hormone</keyword>
<keyword id="KW-0964">Secreted</keyword>
<keyword id="KW-0838">Vasoactive</keyword>
<sequence length="27" mass="2792">SKSSSPCFGGKLDRIGSYSGLGCNSRK</sequence>
<comment type="function">
    <text evidence="1">Hormone playing a key role in cardiovascular homeostasis through regulation of natriuresis, diuresis, and vasodilation. Has a cGMP-stimulating activity (By similarity).</text>
</comment>
<comment type="subcellular location">
    <subcellularLocation>
        <location evidence="3">Secreted</location>
    </subcellularLocation>
</comment>
<comment type="similarity">
    <text evidence="3">Belongs to the natriuretic peptide family.</text>
</comment>
<evidence type="ECO:0000250" key="1"/>
<evidence type="ECO:0000269" key="2">
    <source>
    </source>
</evidence>
<evidence type="ECO:0000305" key="3"/>
<name>ANF_ANGJA</name>